<dbReference type="EC" id="7.1.1.-" evidence="1"/>
<dbReference type="EMBL" id="CT971583">
    <property type="protein sequence ID" value="CAK22861.1"/>
    <property type="molecule type" value="Genomic_DNA"/>
</dbReference>
<dbReference type="SMR" id="A5GIU6"/>
<dbReference type="STRING" id="32051.SynWH7803_0435"/>
<dbReference type="KEGG" id="syx:SynWH7803_0435"/>
<dbReference type="eggNOG" id="ENOG502ZBMI">
    <property type="taxonomic scope" value="Bacteria"/>
</dbReference>
<dbReference type="HOGENOM" id="CLU_087432_0_0_3"/>
<dbReference type="OrthoDB" id="510798at2"/>
<dbReference type="Proteomes" id="UP000001566">
    <property type="component" value="Chromosome"/>
</dbReference>
<dbReference type="GO" id="GO:0031676">
    <property type="term" value="C:plasma membrane-derived thylakoid membrane"/>
    <property type="evidence" value="ECO:0007669"/>
    <property type="project" value="UniProtKB-SubCell"/>
</dbReference>
<dbReference type="GO" id="GO:0016655">
    <property type="term" value="F:oxidoreductase activity, acting on NAD(P)H, quinone or similar compound as acceptor"/>
    <property type="evidence" value="ECO:0007669"/>
    <property type="project" value="UniProtKB-UniRule"/>
</dbReference>
<dbReference type="GO" id="GO:0048038">
    <property type="term" value="F:quinone binding"/>
    <property type="evidence" value="ECO:0007669"/>
    <property type="project" value="UniProtKB-KW"/>
</dbReference>
<dbReference type="HAMAP" id="MF_01353">
    <property type="entry name" value="NDH1_NDH1N"/>
    <property type="match status" value="1"/>
</dbReference>
<dbReference type="InterPro" id="IPR020874">
    <property type="entry name" value="NAD(P)H-quinone_OxRdtase_su_N"/>
</dbReference>
<dbReference type="PANTHER" id="PTHR35515">
    <property type="entry name" value="NAD(P)H-QUINONE OXIDOREDUCTASE SUBUNIT N, CHLOROPLASTIC"/>
    <property type="match status" value="1"/>
</dbReference>
<dbReference type="PANTHER" id="PTHR35515:SF1">
    <property type="entry name" value="NAD(P)H-QUINONE OXIDOREDUCTASE SUBUNIT N, CHLOROPLASTIC"/>
    <property type="match status" value="1"/>
</dbReference>
<dbReference type="Pfam" id="PF11909">
    <property type="entry name" value="NdhN"/>
    <property type="match status" value="1"/>
</dbReference>
<feature type="chain" id="PRO_0000352241" description="NAD(P)H-quinone oxidoreductase subunit N">
    <location>
        <begin position="1"/>
        <end position="153"/>
    </location>
</feature>
<sequence>MPLLLSGRGFRRELESAGCMAVHAPLEGGAETRLLRRLRAAGYRTHLTSARGLGDPEVFLFQKHGVRPPHLGHQSVGRGAAVGEVHDVMPLLGEVFLGDKPVVLWLLEGQVLSRSELLSLCDLCRREPRLKIVVEMGGARSLRWQPMTQLLAA</sequence>
<keyword id="KW-0472">Membrane</keyword>
<keyword id="KW-0520">NAD</keyword>
<keyword id="KW-0521">NADP</keyword>
<keyword id="KW-0618">Plastoquinone</keyword>
<keyword id="KW-0874">Quinone</keyword>
<keyword id="KW-1185">Reference proteome</keyword>
<keyword id="KW-0793">Thylakoid</keyword>
<keyword id="KW-1278">Translocase</keyword>
<keyword id="KW-0813">Transport</keyword>
<protein>
    <recommendedName>
        <fullName evidence="1">NAD(P)H-quinone oxidoreductase subunit N</fullName>
        <ecNumber evidence="1">7.1.1.-</ecNumber>
    </recommendedName>
    <alternativeName>
        <fullName evidence="1">NAD(P)H dehydrogenase I subunit N</fullName>
        <shortName evidence="1">NDH-1 subunit N</shortName>
        <shortName evidence="1">NDH-N</shortName>
    </alternativeName>
</protein>
<evidence type="ECO:0000255" key="1">
    <source>
        <dbReference type="HAMAP-Rule" id="MF_01353"/>
    </source>
</evidence>
<gene>
    <name evidence="1" type="primary">ndhN</name>
    <name type="ordered locus">SynWH7803_0435</name>
</gene>
<proteinExistence type="inferred from homology"/>
<organism>
    <name type="scientific">Synechococcus sp. (strain WH7803)</name>
    <dbReference type="NCBI Taxonomy" id="32051"/>
    <lineage>
        <taxon>Bacteria</taxon>
        <taxon>Bacillati</taxon>
        <taxon>Cyanobacteriota</taxon>
        <taxon>Cyanophyceae</taxon>
        <taxon>Synechococcales</taxon>
        <taxon>Synechococcaceae</taxon>
        <taxon>Synechococcus</taxon>
    </lineage>
</organism>
<name>NDHN_SYNPW</name>
<comment type="function">
    <text evidence="1">NDH-1 shuttles electrons from an unknown electron donor, via FMN and iron-sulfur (Fe-S) centers, to quinones in the respiratory and/or the photosynthetic chain. The immediate electron acceptor for the enzyme in this species is believed to be plastoquinone. Couples the redox reaction to proton translocation, and thus conserves the redox energy in a proton gradient. Cyanobacterial NDH-1 also plays a role in inorganic carbon-concentration.</text>
</comment>
<comment type="catalytic activity">
    <reaction evidence="1">
        <text>a plastoquinone + NADH + (n+1) H(+)(in) = a plastoquinol + NAD(+) + n H(+)(out)</text>
        <dbReference type="Rhea" id="RHEA:42608"/>
        <dbReference type="Rhea" id="RHEA-COMP:9561"/>
        <dbReference type="Rhea" id="RHEA-COMP:9562"/>
        <dbReference type="ChEBI" id="CHEBI:15378"/>
        <dbReference type="ChEBI" id="CHEBI:17757"/>
        <dbReference type="ChEBI" id="CHEBI:57540"/>
        <dbReference type="ChEBI" id="CHEBI:57945"/>
        <dbReference type="ChEBI" id="CHEBI:62192"/>
    </reaction>
</comment>
<comment type="catalytic activity">
    <reaction evidence="1">
        <text>a plastoquinone + NADPH + (n+1) H(+)(in) = a plastoquinol + NADP(+) + n H(+)(out)</text>
        <dbReference type="Rhea" id="RHEA:42612"/>
        <dbReference type="Rhea" id="RHEA-COMP:9561"/>
        <dbReference type="Rhea" id="RHEA-COMP:9562"/>
        <dbReference type="ChEBI" id="CHEBI:15378"/>
        <dbReference type="ChEBI" id="CHEBI:17757"/>
        <dbReference type="ChEBI" id="CHEBI:57783"/>
        <dbReference type="ChEBI" id="CHEBI:58349"/>
        <dbReference type="ChEBI" id="CHEBI:62192"/>
    </reaction>
</comment>
<comment type="subunit">
    <text evidence="1">NDH-1 can be composed of about 15 different subunits; different subcomplexes with different compositions have been identified which probably have different functions.</text>
</comment>
<comment type="subcellular location">
    <subcellularLocation>
        <location evidence="1">Cellular thylakoid membrane</location>
        <topology evidence="1">Peripheral membrane protein</topology>
        <orientation evidence="1">Cytoplasmic side</orientation>
    </subcellularLocation>
</comment>
<comment type="similarity">
    <text evidence="1">Belongs to the complex I NdhN subunit family.</text>
</comment>
<reference key="1">
    <citation type="submission" date="2006-05" db="EMBL/GenBank/DDBJ databases">
        <authorList>
            <consortium name="Genoscope"/>
        </authorList>
    </citation>
    <scope>NUCLEOTIDE SEQUENCE [LARGE SCALE GENOMIC DNA]</scope>
    <source>
        <strain>WH7803</strain>
    </source>
</reference>
<accession>A5GIU6</accession>